<dbReference type="EMBL" id="CP000887">
    <property type="protein sequence ID" value="ACD72615.1"/>
    <property type="molecule type" value="Genomic_DNA"/>
</dbReference>
<dbReference type="RefSeq" id="WP_002964297.1">
    <property type="nucleotide sequence ID" value="NC_010742.1"/>
</dbReference>
<dbReference type="SMR" id="B2S618"/>
<dbReference type="GeneID" id="97533580"/>
<dbReference type="KEGG" id="bmc:BAbS19_I11100"/>
<dbReference type="HOGENOM" id="CLU_134358_0_0_5"/>
<dbReference type="Proteomes" id="UP000002565">
    <property type="component" value="Chromosome 1"/>
</dbReference>
<dbReference type="GO" id="GO:0030163">
    <property type="term" value="P:protein catabolic process"/>
    <property type="evidence" value="ECO:0007669"/>
    <property type="project" value="InterPro"/>
</dbReference>
<dbReference type="GO" id="GO:0006508">
    <property type="term" value="P:proteolysis"/>
    <property type="evidence" value="ECO:0007669"/>
    <property type="project" value="UniProtKB-UniRule"/>
</dbReference>
<dbReference type="FunFam" id="3.30.1390.10:FF:000002">
    <property type="entry name" value="ATP-dependent Clp protease adapter protein ClpS"/>
    <property type="match status" value="1"/>
</dbReference>
<dbReference type="Gene3D" id="3.30.1390.10">
    <property type="match status" value="1"/>
</dbReference>
<dbReference type="HAMAP" id="MF_00302">
    <property type="entry name" value="ClpS"/>
    <property type="match status" value="1"/>
</dbReference>
<dbReference type="InterPro" id="IPR022935">
    <property type="entry name" value="ClpS"/>
</dbReference>
<dbReference type="InterPro" id="IPR003769">
    <property type="entry name" value="ClpS_core"/>
</dbReference>
<dbReference type="InterPro" id="IPR014719">
    <property type="entry name" value="Ribosomal_bL12_C/ClpS-like"/>
</dbReference>
<dbReference type="NCBIfam" id="NF000669">
    <property type="entry name" value="PRK00033.1-2"/>
    <property type="match status" value="1"/>
</dbReference>
<dbReference type="NCBIfam" id="NF000672">
    <property type="entry name" value="PRK00033.1-5"/>
    <property type="match status" value="1"/>
</dbReference>
<dbReference type="PANTHER" id="PTHR33473:SF19">
    <property type="entry name" value="ATP-DEPENDENT CLP PROTEASE ADAPTER PROTEIN CLPS"/>
    <property type="match status" value="1"/>
</dbReference>
<dbReference type="PANTHER" id="PTHR33473">
    <property type="entry name" value="ATP-DEPENDENT CLP PROTEASE ADAPTER PROTEIN CLPS1, CHLOROPLASTIC"/>
    <property type="match status" value="1"/>
</dbReference>
<dbReference type="Pfam" id="PF02617">
    <property type="entry name" value="ClpS"/>
    <property type="match status" value="1"/>
</dbReference>
<dbReference type="SUPFAM" id="SSF54736">
    <property type="entry name" value="ClpS-like"/>
    <property type="match status" value="1"/>
</dbReference>
<reference key="1">
    <citation type="journal article" date="2008" name="PLoS ONE">
        <title>Genome sequence of Brucella abortus vaccine strain S19 compared to virulent strains yields candidate virulence genes.</title>
        <authorList>
            <person name="Crasta O.R."/>
            <person name="Folkerts O."/>
            <person name="Fei Z."/>
            <person name="Mane S.P."/>
            <person name="Evans C."/>
            <person name="Martino-Catt S."/>
            <person name="Bricker B."/>
            <person name="Yu G."/>
            <person name="Du L."/>
            <person name="Sobral B.W."/>
        </authorList>
    </citation>
    <scope>NUCLEOTIDE SEQUENCE [LARGE SCALE GENOMIC DNA]</scope>
    <source>
        <strain>S19</strain>
    </source>
</reference>
<feature type="chain" id="PRO_1000115446" description="ATP-dependent Clp protease adapter protein ClpS">
    <location>
        <begin position="1"/>
        <end position="116"/>
    </location>
</feature>
<feature type="region of interest" description="Disordered" evidence="2">
    <location>
        <begin position="1"/>
        <end position="23"/>
    </location>
</feature>
<feature type="compositionally biased region" description="Polar residues" evidence="2">
    <location>
        <begin position="1"/>
        <end position="11"/>
    </location>
</feature>
<sequence>MRRINTIMQGKTNGGNGPESGTVVVTRTQPKTRKPSLYRVLLLNDDYTPMEFVVHVLQRFFQKNLDDATRIMLHVHNHGVGECGVFTYEVAETKVSQVMDFARQNQHPLQCVMEKK</sequence>
<name>CLPS_BRUA1</name>
<proteinExistence type="inferred from homology"/>
<evidence type="ECO:0000255" key="1">
    <source>
        <dbReference type="HAMAP-Rule" id="MF_00302"/>
    </source>
</evidence>
<evidence type="ECO:0000256" key="2">
    <source>
        <dbReference type="SAM" id="MobiDB-lite"/>
    </source>
</evidence>
<organism>
    <name type="scientific">Brucella abortus (strain S19)</name>
    <dbReference type="NCBI Taxonomy" id="430066"/>
    <lineage>
        <taxon>Bacteria</taxon>
        <taxon>Pseudomonadati</taxon>
        <taxon>Pseudomonadota</taxon>
        <taxon>Alphaproteobacteria</taxon>
        <taxon>Hyphomicrobiales</taxon>
        <taxon>Brucellaceae</taxon>
        <taxon>Brucella/Ochrobactrum group</taxon>
        <taxon>Brucella</taxon>
    </lineage>
</organism>
<comment type="function">
    <text evidence="1">Involved in the modulation of the specificity of the ClpAP-mediated ATP-dependent protein degradation.</text>
</comment>
<comment type="subunit">
    <text evidence="1">Binds to the N-terminal domain of the chaperone ClpA.</text>
</comment>
<comment type="similarity">
    <text evidence="1">Belongs to the ClpS family.</text>
</comment>
<gene>
    <name evidence="1" type="primary">clpS</name>
    <name type="ordered locus">BAbS19_I11100</name>
</gene>
<accession>B2S618</accession>
<protein>
    <recommendedName>
        <fullName evidence="1">ATP-dependent Clp protease adapter protein ClpS</fullName>
    </recommendedName>
</protein>